<proteinExistence type="evidence at protein level"/>
<gene>
    <name type="primary">MOS1</name>
    <name type="ordered locus">At4g24680</name>
    <name type="ORF">F22K18.120</name>
</gene>
<evidence type="ECO:0000255" key="1"/>
<evidence type="ECO:0000256" key="2">
    <source>
        <dbReference type="SAM" id="MobiDB-lite"/>
    </source>
</evidence>
<evidence type="ECO:0000269" key="3">
    <source>
    </source>
</evidence>
<evidence type="ECO:0000269" key="4">
    <source>
    </source>
</evidence>
<evidence type="ECO:0000305" key="5"/>
<evidence type="ECO:0007744" key="6">
    <source>
    </source>
</evidence>
<keyword id="KW-0156">Chromatin regulator</keyword>
<keyword id="KW-0175">Coiled coil</keyword>
<keyword id="KW-0597">Phosphoprotein</keyword>
<keyword id="KW-1185">Reference proteome</keyword>
<organism>
    <name type="scientific">Arabidopsis thaliana</name>
    <name type="common">Mouse-ear cress</name>
    <dbReference type="NCBI Taxonomy" id="3702"/>
    <lineage>
        <taxon>Eukaryota</taxon>
        <taxon>Viridiplantae</taxon>
        <taxon>Streptophyta</taxon>
        <taxon>Embryophyta</taxon>
        <taxon>Tracheophyta</taxon>
        <taxon>Spermatophyta</taxon>
        <taxon>Magnoliopsida</taxon>
        <taxon>eudicotyledons</taxon>
        <taxon>Gunneridae</taxon>
        <taxon>Pentapetalae</taxon>
        <taxon>rosids</taxon>
        <taxon>malvids</taxon>
        <taxon>Brassicales</taxon>
        <taxon>Brassicaceae</taxon>
        <taxon>Camelineae</taxon>
        <taxon>Arabidopsis</taxon>
    </lineage>
</organism>
<feature type="chain" id="PRO_0000399941" description="Protein MODIFIER OF SNC1 1">
    <location>
        <begin position="1"/>
        <end position="1412"/>
    </location>
</feature>
<feature type="region of interest" description="Disordered" evidence="2">
    <location>
        <begin position="1"/>
        <end position="276"/>
    </location>
</feature>
<feature type="region of interest" description="Disordered" evidence="2">
    <location>
        <begin position="384"/>
        <end position="437"/>
    </location>
</feature>
<feature type="region of interest" description="Disordered" evidence="2">
    <location>
        <begin position="472"/>
        <end position="798"/>
    </location>
</feature>
<feature type="region of interest" description="Disordered" evidence="2">
    <location>
        <begin position="827"/>
        <end position="888"/>
    </location>
</feature>
<feature type="region of interest" description="Disordered" evidence="2">
    <location>
        <begin position="909"/>
        <end position="1144"/>
    </location>
</feature>
<feature type="region of interest" description="Disordered" evidence="2">
    <location>
        <begin position="1156"/>
        <end position="1412"/>
    </location>
</feature>
<feature type="coiled-coil region" evidence="1">
    <location>
        <begin position="667"/>
        <end position="717"/>
    </location>
</feature>
<feature type="compositionally biased region" description="Polar residues" evidence="2">
    <location>
        <begin position="56"/>
        <end position="103"/>
    </location>
</feature>
<feature type="compositionally biased region" description="Low complexity" evidence="2">
    <location>
        <begin position="109"/>
        <end position="119"/>
    </location>
</feature>
<feature type="compositionally biased region" description="Polar residues" evidence="2">
    <location>
        <begin position="120"/>
        <end position="135"/>
    </location>
</feature>
<feature type="compositionally biased region" description="Basic and acidic residues" evidence="2">
    <location>
        <begin position="197"/>
        <end position="207"/>
    </location>
</feature>
<feature type="compositionally biased region" description="Basic and acidic residues" evidence="2">
    <location>
        <begin position="236"/>
        <end position="267"/>
    </location>
</feature>
<feature type="compositionally biased region" description="Basic and acidic residues" evidence="2">
    <location>
        <begin position="478"/>
        <end position="488"/>
    </location>
</feature>
<feature type="compositionally biased region" description="Polar residues" evidence="2">
    <location>
        <begin position="517"/>
        <end position="531"/>
    </location>
</feature>
<feature type="compositionally biased region" description="Polar residues" evidence="2">
    <location>
        <begin position="539"/>
        <end position="553"/>
    </location>
</feature>
<feature type="compositionally biased region" description="Polar residues" evidence="2">
    <location>
        <begin position="565"/>
        <end position="581"/>
    </location>
</feature>
<feature type="compositionally biased region" description="Polar residues" evidence="2">
    <location>
        <begin position="610"/>
        <end position="639"/>
    </location>
</feature>
<feature type="compositionally biased region" description="Basic and acidic residues" evidence="2">
    <location>
        <begin position="665"/>
        <end position="713"/>
    </location>
</feature>
<feature type="compositionally biased region" description="Polar residues" evidence="2">
    <location>
        <begin position="738"/>
        <end position="749"/>
    </location>
</feature>
<feature type="compositionally biased region" description="Polar residues" evidence="2">
    <location>
        <begin position="756"/>
        <end position="779"/>
    </location>
</feature>
<feature type="compositionally biased region" description="Polar residues" evidence="2">
    <location>
        <begin position="829"/>
        <end position="847"/>
    </location>
</feature>
<feature type="compositionally biased region" description="Basic residues" evidence="2">
    <location>
        <begin position="850"/>
        <end position="862"/>
    </location>
</feature>
<feature type="compositionally biased region" description="Basic and acidic residues" evidence="2">
    <location>
        <begin position="877"/>
        <end position="888"/>
    </location>
</feature>
<feature type="compositionally biased region" description="Polar residues" evidence="2">
    <location>
        <begin position="914"/>
        <end position="938"/>
    </location>
</feature>
<feature type="compositionally biased region" description="Polar residues" evidence="2">
    <location>
        <begin position="983"/>
        <end position="1003"/>
    </location>
</feature>
<feature type="compositionally biased region" description="Basic and acidic residues" evidence="2">
    <location>
        <begin position="1006"/>
        <end position="1023"/>
    </location>
</feature>
<feature type="compositionally biased region" description="Polar residues" evidence="2">
    <location>
        <begin position="1056"/>
        <end position="1070"/>
    </location>
</feature>
<feature type="compositionally biased region" description="Basic residues" evidence="2">
    <location>
        <begin position="1071"/>
        <end position="1084"/>
    </location>
</feature>
<feature type="compositionally biased region" description="Polar residues" evidence="2">
    <location>
        <begin position="1106"/>
        <end position="1137"/>
    </location>
</feature>
<feature type="compositionally biased region" description="Basic and acidic residues" evidence="2">
    <location>
        <begin position="1191"/>
        <end position="1202"/>
    </location>
</feature>
<feature type="compositionally biased region" description="Basic and acidic residues" evidence="2">
    <location>
        <begin position="1222"/>
        <end position="1232"/>
    </location>
</feature>
<feature type="compositionally biased region" description="Basic and acidic residues" evidence="2">
    <location>
        <begin position="1242"/>
        <end position="1251"/>
    </location>
</feature>
<feature type="compositionally biased region" description="Polar residues" evidence="2">
    <location>
        <begin position="1266"/>
        <end position="1286"/>
    </location>
</feature>
<feature type="compositionally biased region" description="Polar residues" evidence="2">
    <location>
        <begin position="1293"/>
        <end position="1307"/>
    </location>
</feature>
<feature type="compositionally biased region" description="Basic and acidic residues" evidence="2">
    <location>
        <begin position="1338"/>
        <end position="1351"/>
    </location>
</feature>
<feature type="compositionally biased region" description="Basic and acidic residues" evidence="2">
    <location>
        <begin position="1359"/>
        <end position="1369"/>
    </location>
</feature>
<feature type="compositionally biased region" description="Low complexity" evidence="2">
    <location>
        <begin position="1384"/>
        <end position="1397"/>
    </location>
</feature>
<feature type="compositionally biased region" description="Gly residues" evidence="2">
    <location>
        <begin position="1400"/>
        <end position="1412"/>
    </location>
</feature>
<feature type="modified residue" description="Phosphoserine" evidence="6">
    <location>
        <position position="72"/>
    </location>
</feature>
<feature type="modified residue" description="Phosphoserine" evidence="6">
    <location>
        <position position="883"/>
    </location>
</feature>
<feature type="sequence conflict" description="In Ref. 2; AAL32626." evidence="5" ref="2">
    <original>G</original>
    <variation>S</variation>
    <location>
        <position position="1083"/>
    </location>
</feature>
<comment type="function">
    <text evidence="3">Involved in the regulation of the chromatin structure and DNA methylation at the SNC1 locus. Regulates the expression of SNC1 at chromatin level.</text>
</comment>
<comment type="subunit">
    <text evidence="4">Interacts with TCP14 and TCP15.</text>
</comment>
<comment type="disruption phenotype">
    <text evidence="3">No visible phenotype.</text>
</comment>
<comment type="sequence caution" evidence="5">
    <conflict type="erroneous initiation">
        <sequence resource="EMBL-CDS" id="AAL32626"/>
    </conflict>
    <text>Truncated N-terminus.</text>
</comment>
<comment type="sequence caution" evidence="5">
    <conflict type="erroneous gene model prediction">
        <sequence resource="EMBL-CDS" id="AEE84942"/>
    </conflict>
</comment>
<comment type="sequence caution" evidence="5">
    <conflict type="erroneous gene model prediction">
        <sequence resource="EMBL-CDS" id="CAA22995"/>
    </conflict>
</comment>
<comment type="sequence caution" evidence="5">
    <conflict type="erroneous gene model prediction">
        <sequence resource="EMBL-CDS" id="CAB79378"/>
    </conflict>
</comment>
<dbReference type="EMBL" id="HM208348">
    <property type="protein sequence ID" value="ADI87413.1"/>
    <property type="molecule type" value="mRNA"/>
</dbReference>
<dbReference type="EMBL" id="AL035356">
    <property type="protein sequence ID" value="CAA22995.1"/>
    <property type="status" value="ALT_SEQ"/>
    <property type="molecule type" value="Genomic_DNA"/>
</dbReference>
<dbReference type="EMBL" id="AL161562">
    <property type="protein sequence ID" value="CAB79378.1"/>
    <property type="status" value="ALT_SEQ"/>
    <property type="molecule type" value="Genomic_DNA"/>
</dbReference>
<dbReference type="EMBL" id="CP002687">
    <property type="protein sequence ID" value="AEE84942.1"/>
    <property type="status" value="ALT_SEQ"/>
    <property type="molecule type" value="Genomic_DNA"/>
</dbReference>
<dbReference type="EMBL" id="CP002687">
    <property type="protein sequence ID" value="ANM67216.1"/>
    <property type="molecule type" value="Genomic_DNA"/>
</dbReference>
<dbReference type="EMBL" id="CP002687">
    <property type="protein sequence ID" value="ANM67218.1"/>
    <property type="molecule type" value="Genomic_DNA"/>
</dbReference>
<dbReference type="EMBL" id="AY062548">
    <property type="protein sequence ID" value="AAL32626.1"/>
    <property type="status" value="ALT_INIT"/>
    <property type="molecule type" value="mRNA"/>
</dbReference>
<dbReference type="EMBL" id="AY093339">
    <property type="protein sequence ID" value="AAM13338.1"/>
    <property type="molecule type" value="mRNA"/>
</dbReference>
<dbReference type="PIR" id="T05566">
    <property type="entry name" value="T05566"/>
</dbReference>
<dbReference type="RefSeq" id="NP_001329059.1">
    <property type="nucleotide sequence ID" value="NM_001341694.1"/>
</dbReference>
<dbReference type="RefSeq" id="NP_001329061.1">
    <property type="nucleotide sequence ID" value="NM_001341692.1"/>
</dbReference>
<dbReference type="RefSeq" id="NP_194199.4">
    <property type="nucleotide sequence ID" value="NM_118601.5"/>
</dbReference>
<dbReference type="SMR" id="Q9SB63"/>
<dbReference type="BioGRID" id="13859">
    <property type="interactions" value="9"/>
</dbReference>
<dbReference type="FunCoup" id="Q9SB63">
    <property type="interactions" value="2192"/>
</dbReference>
<dbReference type="IntAct" id="Q9SB63">
    <property type="interactions" value="6"/>
</dbReference>
<dbReference type="STRING" id="3702.Q9SB63"/>
<dbReference type="GlyGen" id="Q9SB63">
    <property type="glycosylation" value="2 sites, 1 O-linked glycan (1 site)"/>
</dbReference>
<dbReference type="iPTMnet" id="Q9SB63"/>
<dbReference type="PaxDb" id="3702-AT4G24680.1"/>
<dbReference type="ProteomicsDB" id="250940"/>
<dbReference type="EnsemblPlants" id="AT4G24680.3">
    <property type="protein sequence ID" value="AT4G24680.3"/>
    <property type="gene ID" value="AT4G24680"/>
</dbReference>
<dbReference type="EnsemblPlants" id="AT4G24680.5">
    <property type="protein sequence ID" value="AT4G24680.5"/>
    <property type="gene ID" value="AT4G24680"/>
</dbReference>
<dbReference type="GeneID" id="828570"/>
<dbReference type="Gramene" id="AT4G24680.3">
    <property type="protein sequence ID" value="AT4G24680.3"/>
    <property type="gene ID" value="AT4G24680"/>
</dbReference>
<dbReference type="Gramene" id="AT4G24680.5">
    <property type="protein sequence ID" value="AT4G24680.5"/>
    <property type="gene ID" value="AT4G24680"/>
</dbReference>
<dbReference type="KEGG" id="ath:AT4G24680"/>
<dbReference type="Araport" id="AT4G24680"/>
<dbReference type="TAIR" id="AT4G24680">
    <property type="gene designation" value="MOS1"/>
</dbReference>
<dbReference type="eggNOG" id="ENOG502SF51">
    <property type="taxonomic scope" value="Eukaryota"/>
</dbReference>
<dbReference type="HOGENOM" id="CLU_252180_0_0_1"/>
<dbReference type="InParanoid" id="Q9SB63"/>
<dbReference type="PhylomeDB" id="Q9SB63"/>
<dbReference type="CD-CODE" id="4299E36E">
    <property type="entry name" value="Nucleolus"/>
</dbReference>
<dbReference type="PRO" id="PR:Q9SB63"/>
<dbReference type="Proteomes" id="UP000006548">
    <property type="component" value="Chromosome 4"/>
</dbReference>
<dbReference type="ExpressionAtlas" id="Q9SB63">
    <property type="expression patterns" value="baseline and differential"/>
</dbReference>
<dbReference type="GO" id="GO:0006325">
    <property type="term" value="P:chromatin organization"/>
    <property type="evidence" value="ECO:0007669"/>
    <property type="project" value="UniProtKB-KW"/>
</dbReference>
<dbReference type="InterPro" id="IPR009738">
    <property type="entry name" value="BAT2_N"/>
</dbReference>
<dbReference type="InterPro" id="IPR038808">
    <property type="entry name" value="MOS1-like"/>
</dbReference>
<dbReference type="PANTHER" id="PTHR34805">
    <property type="entry name" value="PROTEIN MODIFIER OF SNC1 1"/>
    <property type="match status" value="1"/>
</dbReference>
<dbReference type="PANTHER" id="PTHR34805:SF1">
    <property type="entry name" value="PROTEIN MODIFIER OF SNC1 1"/>
    <property type="match status" value="1"/>
</dbReference>
<dbReference type="Pfam" id="PF07001">
    <property type="entry name" value="BAT2_N"/>
    <property type="match status" value="1"/>
</dbReference>
<sequence>MTSSTTGDRRWGTTRRSGMTILGKVAVPKPINLPSQRLENQGLDPNVEIVPKGTLSWGSKSSLNAWGTSSLSPRTESGPGSPSHLSNRPSSGGSVTRPSTADSNKAHDSSSSVAWDSNSRPSSASGVFPSNQPSVALQRPHSADTRPGSSQLSRFAEPVSETSATWGQHVAPEKLGVAPSKNDGFSLTSGDFPSLGAEKDTSEKSTRPQDAGPHARPPSSSGRSVEGQGVDCTEEANDRIGDANSWRRENQPYSEDAPRHCREEGQLDSRGSQSYPNANFPPRYDAWRGPPVNNHQGGGWYGGNHPYGAPMGPGGFHMDPFPFYPTQVPPAPGHGAGPRGNHANNERMFRPPMLDSYVHPRMQTRPGFYVGPAPHEGYYGPPMGYGSPSNRDLPFAGRPTGPHAYNNHSGQGGYDTPGSSVSLERNESSHSQETQRPYKVLLKHQDGRFGEDNAKREEFLGNRLPNAEKIAQQMQTSRNERREIRNDASGEVQPVKAELAAPGDPSLIQKIEGLNAKTRTNDGWQNSSSVVNRDEQESQPRTLNSGNSANKVSARNHRTGHASDSKNSSHYNQGDSATNKNAEPAAMGGTSIFRRPTQQTQGRADPQTKRIVNSEGNDAWQKTTVMSGSSHTTLATNTESFREVNVDDSLDTESIRRPGSGISADPKDNQRSTMRELARQRAQQRQKEEEERARDQRAKALAKLEELNRRSQIYEEGSVKNMEAASNASPADMPTDPGSHSSNATNSVEPTGGSGKNTTQNTRTSTEYANNVGPSQQDNLPRDGGASKQKRLGYKQKQNIIFEKKPTGSSVATAEVFDVVPSPEVVNEGVSSNNSDMPATSTVSAESTFPKRKNNRNGKKKHKAEETATMNTTRVAVGKETKSGDESIETARARAAEIELGSVSVPSLDIKVSGDSSEQISSFTNEESQNRAKNNWKSQHVRRTQRNSLVNKPAEKFSGNNAVIWAPVHPQQKADVSTGGGSQTTVPEFGTSSKSQHQGQTSSKSKRVEIERYVPKPIVKEMAEQIVSKNLVTSAPDMSENVNQKENRGGEGTGILQPSGSTAGKSGSPSKSRHGNGRQGKHGREHASWHQRGSGAPTKALEDGQFVTSNQPIRGTVNYHSSKQTEQIAAKDQTTCNKDGWNDGWYMTPETHYSAAEEMESSAVGKDQGMSMHGRQHASRSNKDGGSNYGDPKKGNKRDFNKAHTQHSGHGFSQPDLPAASKEGRVPGDHVWHTANRTGKYGGRESTRDKPYGSQEKNVVGYEHQGFTTEQKTTSADTQAQLQNRSTNKEVQVEQNPNSMFQKNTGQGRRFGRGQESQGGWGLPAQENMHHHHQRPPSNRDRQKQNLHYEYKPVGSHTYDGERSREQSKESSQTEGPRYREKGQGQQRQGGYQQQRGTSGRNGGHGFTGDRN</sequence>
<reference key="1">
    <citation type="journal article" date="2010" name="Plant Physiol.">
        <title>Regulation of the expression of plant Resistance gene SNC1 by a protein with a conserved BAT2 domain.</title>
        <authorList>
            <person name="Li Y."/>
            <person name="Tessaro M.J."/>
            <person name="Li X."/>
            <person name="Zhang Y."/>
        </authorList>
    </citation>
    <scope>NUCLEOTIDE SEQUENCE [MRNA]</scope>
    <scope>FUNCTION</scope>
    <scope>DISRUPTION PHENOTYPE</scope>
</reference>
<reference key="2">
    <citation type="journal article" date="1999" name="Nature">
        <title>Sequence and analysis of chromosome 4 of the plant Arabidopsis thaliana.</title>
        <authorList>
            <person name="Mayer K.F.X."/>
            <person name="Schueller C."/>
            <person name="Wambutt R."/>
            <person name="Murphy G."/>
            <person name="Volckaert G."/>
            <person name="Pohl T."/>
            <person name="Duesterhoeft A."/>
            <person name="Stiekema W."/>
            <person name="Entian K.-D."/>
            <person name="Terryn N."/>
            <person name="Harris B."/>
            <person name="Ansorge W."/>
            <person name="Brandt P."/>
            <person name="Grivell L.A."/>
            <person name="Rieger M."/>
            <person name="Weichselgartner M."/>
            <person name="de Simone V."/>
            <person name="Obermaier B."/>
            <person name="Mache R."/>
            <person name="Mueller M."/>
            <person name="Kreis M."/>
            <person name="Delseny M."/>
            <person name="Puigdomenech P."/>
            <person name="Watson M."/>
            <person name="Schmidtheini T."/>
            <person name="Reichert B."/>
            <person name="Portetelle D."/>
            <person name="Perez-Alonso M."/>
            <person name="Boutry M."/>
            <person name="Bancroft I."/>
            <person name="Vos P."/>
            <person name="Hoheisel J."/>
            <person name="Zimmermann W."/>
            <person name="Wedler H."/>
            <person name="Ridley P."/>
            <person name="Langham S.-A."/>
            <person name="McCullagh B."/>
            <person name="Bilham L."/>
            <person name="Robben J."/>
            <person name="van der Schueren J."/>
            <person name="Grymonprez B."/>
            <person name="Chuang Y.-J."/>
            <person name="Vandenbussche F."/>
            <person name="Braeken M."/>
            <person name="Weltjens I."/>
            <person name="Voet M."/>
            <person name="Bastiaens I."/>
            <person name="Aert R."/>
            <person name="Defoor E."/>
            <person name="Weitzenegger T."/>
            <person name="Bothe G."/>
            <person name="Ramsperger U."/>
            <person name="Hilbert H."/>
            <person name="Braun M."/>
            <person name="Holzer E."/>
            <person name="Brandt A."/>
            <person name="Peters S."/>
            <person name="van Staveren M."/>
            <person name="Dirkse W."/>
            <person name="Mooijman P."/>
            <person name="Klein Lankhorst R."/>
            <person name="Rose M."/>
            <person name="Hauf J."/>
            <person name="Koetter P."/>
            <person name="Berneiser S."/>
            <person name="Hempel S."/>
            <person name="Feldpausch M."/>
            <person name="Lamberth S."/>
            <person name="Van den Daele H."/>
            <person name="De Keyser A."/>
            <person name="Buysshaert C."/>
            <person name="Gielen J."/>
            <person name="Villarroel R."/>
            <person name="De Clercq R."/>
            <person name="van Montagu M."/>
            <person name="Rogers J."/>
            <person name="Cronin A."/>
            <person name="Quail M.A."/>
            <person name="Bray-Allen S."/>
            <person name="Clark L."/>
            <person name="Doggett J."/>
            <person name="Hall S."/>
            <person name="Kay M."/>
            <person name="Lennard N."/>
            <person name="McLay K."/>
            <person name="Mayes R."/>
            <person name="Pettett A."/>
            <person name="Rajandream M.A."/>
            <person name="Lyne M."/>
            <person name="Benes V."/>
            <person name="Rechmann S."/>
            <person name="Borkova D."/>
            <person name="Bloecker H."/>
            <person name="Scharfe M."/>
            <person name="Grimm M."/>
            <person name="Loehnert T.-H."/>
            <person name="Dose S."/>
            <person name="de Haan M."/>
            <person name="Maarse A.C."/>
            <person name="Schaefer M."/>
            <person name="Mueller-Auer S."/>
            <person name="Gabel C."/>
            <person name="Fuchs M."/>
            <person name="Fartmann B."/>
            <person name="Granderath K."/>
            <person name="Dauner D."/>
            <person name="Herzl A."/>
            <person name="Neumann S."/>
            <person name="Argiriou A."/>
            <person name="Vitale D."/>
            <person name="Liguori R."/>
            <person name="Piravandi E."/>
            <person name="Massenet O."/>
            <person name="Quigley F."/>
            <person name="Clabauld G."/>
            <person name="Muendlein A."/>
            <person name="Felber R."/>
            <person name="Schnabl S."/>
            <person name="Hiller R."/>
            <person name="Schmidt W."/>
            <person name="Lecharny A."/>
            <person name="Aubourg S."/>
            <person name="Chefdor F."/>
            <person name="Cooke R."/>
            <person name="Berger C."/>
            <person name="Monfort A."/>
            <person name="Casacuberta E."/>
            <person name="Gibbons T."/>
            <person name="Weber N."/>
            <person name="Vandenbol M."/>
            <person name="Bargues M."/>
            <person name="Terol J."/>
            <person name="Torres A."/>
            <person name="Perez-Perez A."/>
            <person name="Purnelle B."/>
            <person name="Bent E."/>
            <person name="Johnson S."/>
            <person name="Tacon D."/>
            <person name="Jesse T."/>
            <person name="Heijnen L."/>
            <person name="Schwarz S."/>
            <person name="Scholler P."/>
            <person name="Heber S."/>
            <person name="Francs P."/>
            <person name="Bielke C."/>
            <person name="Frishman D."/>
            <person name="Haase D."/>
            <person name="Lemcke K."/>
            <person name="Mewes H.-W."/>
            <person name="Stocker S."/>
            <person name="Zaccaria P."/>
            <person name="Bevan M."/>
            <person name="Wilson R.K."/>
            <person name="de la Bastide M."/>
            <person name="Habermann K."/>
            <person name="Parnell L."/>
            <person name="Dedhia N."/>
            <person name="Gnoj L."/>
            <person name="Schutz K."/>
            <person name="Huang E."/>
            <person name="Spiegel L."/>
            <person name="Sekhon M."/>
            <person name="Murray J."/>
            <person name="Sheet P."/>
            <person name="Cordes M."/>
            <person name="Abu-Threideh J."/>
            <person name="Stoneking T."/>
            <person name="Kalicki J."/>
            <person name="Graves T."/>
            <person name="Harmon G."/>
            <person name="Edwards J."/>
            <person name="Latreille P."/>
            <person name="Courtney L."/>
            <person name="Cloud J."/>
            <person name="Abbott A."/>
            <person name="Scott K."/>
            <person name="Johnson D."/>
            <person name="Minx P."/>
            <person name="Bentley D."/>
            <person name="Fulton B."/>
            <person name="Miller N."/>
            <person name="Greco T."/>
            <person name="Kemp K."/>
            <person name="Kramer J."/>
            <person name="Fulton L."/>
            <person name="Mardis E."/>
            <person name="Dante M."/>
            <person name="Pepin K."/>
            <person name="Hillier L.W."/>
            <person name="Nelson J."/>
            <person name="Spieth J."/>
            <person name="Ryan E."/>
            <person name="Andrews S."/>
            <person name="Geisel C."/>
            <person name="Layman D."/>
            <person name="Du H."/>
            <person name="Ali J."/>
            <person name="Berghoff A."/>
            <person name="Jones K."/>
            <person name="Drone K."/>
            <person name="Cotton M."/>
            <person name="Joshu C."/>
            <person name="Antonoiu B."/>
            <person name="Zidanic M."/>
            <person name="Strong C."/>
            <person name="Sun H."/>
            <person name="Lamar B."/>
            <person name="Yordan C."/>
            <person name="Ma P."/>
            <person name="Zhong J."/>
            <person name="Preston R."/>
            <person name="Vil D."/>
            <person name="Shekher M."/>
            <person name="Matero A."/>
            <person name="Shah R."/>
            <person name="Swaby I.K."/>
            <person name="O'Shaughnessy A."/>
            <person name="Rodriguez M."/>
            <person name="Hoffman J."/>
            <person name="Till S."/>
            <person name="Granat S."/>
            <person name="Shohdy N."/>
            <person name="Hasegawa A."/>
            <person name="Hameed A."/>
            <person name="Lodhi M."/>
            <person name="Johnson A."/>
            <person name="Chen E."/>
            <person name="Marra M.A."/>
            <person name="Martienssen R."/>
            <person name="McCombie W.R."/>
        </authorList>
    </citation>
    <scope>NUCLEOTIDE SEQUENCE [LARGE SCALE GENOMIC DNA]</scope>
    <source>
        <strain>cv. Columbia</strain>
    </source>
</reference>
<reference key="3">
    <citation type="journal article" date="2017" name="Plant J.">
        <title>Araport11: a complete reannotation of the Arabidopsis thaliana reference genome.</title>
        <authorList>
            <person name="Cheng C.Y."/>
            <person name="Krishnakumar V."/>
            <person name="Chan A.P."/>
            <person name="Thibaud-Nissen F."/>
            <person name="Schobel S."/>
            <person name="Town C.D."/>
        </authorList>
    </citation>
    <scope>GENOME REANNOTATION</scope>
    <source>
        <strain>cv. Columbia</strain>
    </source>
</reference>
<reference key="4">
    <citation type="journal article" date="2003" name="Science">
        <title>Empirical analysis of transcriptional activity in the Arabidopsis genome.</title>
        <authorList>
            <person name="Yamada K."/>
            <person name="Lim J."/>
            <person name="Dale J.M."/>
            <person name="Chen H."/>
            <person name="Shinn P."/>
            <person name="Palm C.J."/>
            <person name="Southwick A.M."/>
            <person name="Wu H.C."/>
            <person name="Kim C.J."/>
            <person name="Nguyen M."/>
            <person name="Pham P.K."/>
            <person name="Cheuk R.F."/>
            <person name="Karlin-Newmann G."/>
            <person name="Liu S.X."/>
            <person name="Lam B."/>
            <person name="Sakano H."/>
            <person name="Wu T."/>
            <person name="Yu G."/>
            <person name="Miranda M."/>
            <person name="Quach H.L."/>
            <person name="Tripp M."/>
            <person name="Chang C.H."/>
            <person name="Lee J.M."/>
            <person name="Toriumi M.J."/>
            <person name="Chan M.M."/>
            <person name="Tang C.C."/>
            <person name="Onodera C.S."/>
            <person name="Deng J.M."/>
            <person name="Akiyama K."/>
            <person name="Ansari Y."/>
            <person name="Arakawa T."/>
            <person name="Banh J."/>
            <person name="Banno F."/>
            <person name="Bowser L."/>
            <person name="Brooks S.Y."/>
            <person name="Carninci P."/>
            <person name="Chao Q."/>
            <person name="Choy N."/>
            <person name="Enju A."/>
            <person name="Goldsmith A.D."/>
            <person name="Gurjal M."/>
            <person name="Hansen N.F."/>
            <person name="Hayashizaki Y."/>
            <person name="Johnson-Hopson C."/>
            <person name="Hsuan V.W."/>
            <person name="Iida K."/>
            <person name="Karnes M."/>
            <person name="Khan S."/>
            <person name="Koesema E."/>
            <person name="Ishida J."/>
            <person name="Jiang P.X."/>
            <person name="Jones T."/>
            <person name="Kawai J."/>
            <person name="Kamiya A."/>
            <person name="Meyers C."/>
            <person name="Nakajima M."/>
            <person name="Narusaka M."/>
            <person name="Seki M."/>
            <person name="Sakurai T."/>
            <person name="Satou M."/>
            <person name="Tamse R."/>
            <person name="Vaysberg M."/>
            <person name="Wallender E.K."/>
            <person name="Wong C."/>
            <person name="Yamamura Y."/>
            <person name="Yuan S."/>
            <person name="Shinozaki K."/>
            <person name="Davis R.W."/>
            <person name="Theologis A."/>
            <person name="Ecker J.R."/>
        </authorList>
    </citation>
    <scope>NUCLEOTIDE SEQUENCE [LARGE SCALE MRNA] OF 878-1412</scope>
    <source>
        <strain>cv. Columbia</strain>
    </source>
</reference>
<reference key="5">
    <citation type="journal article" date="2009" name="Plant Physiol.">
        <title>Large-scale Arabidopsis phosphoproteome profiling reveals novel chloroplast kinase substrates and phosphorylation networks.</title>
        <authorList>
            <person name="Reiland S."/>
            <person name="Messerli G."/>
            <person name="Baerenfaller K."/>
            <person name="Gerrits B."/>
            <person name="Endler A."/>
            <person name="Grossmann J."/>
            <person name="Gruissem W."/>
            <person name="Baginsky S."/>
        </authorList>
    </citation>
    <scope>PHOSPHORYLATION [LARGE SCALE ANALYSIS] AT SER-72 AND SER-883</scope>
    <scope>IDENTIFICATION BY MASS SPECTROMETRY [LARGE SCALE ANALYSIS]</scope>
</reference>
<reference key="6">
    <citation type="journal article" date="2018" name="Plant J.">
        <title>MOS1 functions closely with TCP transcription factors to modulate immunity and cell cycle in Arabidopsis.</title>
        <authorList>
            <person name="Zhang N."/>
            <person name="Wang Z."/>
            <person name="Bao Z."/>
            <person name="Yang L."/>
            <person name="Wu D."/>
            <person name="Shu X."/>
            <person name="Hua J."/>
        </authorList>
    </citation>
    <scope>INTERACTION WITH TCP14 AND TCP15</scope>
</reference>
<name>MOS1_ARATH</name>
<accession>Q9SB63</accession>
<accession>D9IVG9</accession>
<accession>F4JR07</accession>
<accession>Q8W4I1</accession>
<protein>
    <recommendedName>
        <fullName>Protein MODIFIER OF SNC1 1</fullName>
    </recommendedName>
    <alternativeName>
        <fullName>MODIFIER OF snc1, 1</fullName>
    </alternativeName>
</protein>